<organism>
    <name type="scientific">Xenopus tropicalis</name>
    <name type="common">Western clawed frog</name>
    <name type="synonym">Silurana tropicalis</name>
    <dbReference type="NCBI Taxonomy" id="8364"/>
    <lineage>
        <taxon>Eukaryota</taxon>
        <taxon>Metazoa</taxon>
        <taxon>Chordata</taxon>
        <taxon>Craniata</taxon>
        <taxon>Vertebrata</taxon>
        <taxon>Euteleostomi</taxon>
        <taxon>Amphibia</taxon>
        <taxon>Batrachia</taxon>
        <taxon>Anura</taxon>
        <taxon>Pipoidea</taxon>
        <taxon>Pipidae</taxon>
        <taxon>Xenopodinae</taxon>
        <taxon>Xenopus</taxon>
        <taxon>Silurana</taxon>
    </lineage>
</organism>
<keyword id="KW-0449">Lipoprotein</keyword>
<keyword id="KW-0472">Membrane</keyword>
<keyword id="KW-0488">Methylation</keyword>
<keyword id="KW-0539">Nucleus</keyword>
<keyword id="KW-0636">Prenylation</keyword>
<keyword id="KW-1185">Reference proteome</keyword>
<comment type="function">
    <text evidence="2">Nuclear envelope-associated factor that is involved in the nuclear envelope ruptures during interphase (NERDI) repair.</text>
</comment>
<comment type="subcellular location">
    <subcellularLocation>
        <location evidence="2">Nucleus membrane</location>
        <topology evidence="2">Lipid-anchor</topology>
    </subcellularLocation>
</comment>
<comment type="PTM">
    <text evidence="2">Farnesylation is required for nuclear envelope localization.</text>
</comment>
<comment type="similarity">
    <text evidence="5">Belongs to the BROX family.</text>
</comment>
<proteinExistence type="evidence at transcript level"/>
<reference key="1">
    <citation type="submission" date="2007-03" db="EMBL/GenBank/DDBJ databases">
        <authorList>
            <consortium name="NIH - Xenopus Gene Collection (XGC) project"/>
        </authorList>
    </citation>
    <scope>NUCLEOTIDE SEQUENCE [LARGE SCALE MRNA]</scope>
    <source>
        <tissue>Brain</tissue>
    </source>
</reference>
<name>BROX_XENTR</name>
<dbReference type="EMBL" id="BC136067">
    <property type="protein sequence ID" value="AAI36068.1"/>
    <property type="molecule type" value="mRNA"/>
</dbReference>
<dbReference type="RefSeq" id="NP_001096412.1">
    <property type="nucleotide sequence ID" value="NM_001102942.1"/>
</dbReference>
<dbReference type="RefSeq" id="XP_017949251.1">
    <property type="nucleotide sequence ID" value="XM_018093762.1"/>
</dbReference>
<dbReference type="RefSeq" id="XP_031757316.1">
    <property type="nucleotide sequence ID" value="XM_031901456.1"/>
</dbReference>
<dbReference type="SMR" id="A4IIL4"/>
<dbReference type="FunCoup" id="A4IIL4">
    <property type="interactions" value="2067"/>
</dbReference>
<dbReference type="STRING" id="8364.ENSXETP00000013613"/>
<dbReference type="PaxDb" id="8364-ENSXETP00000032889"/>
<dbReference type="DNASU" id="100125017"/>
<dbReference type="GeneID" id="100125017"/>
<dbReference type="KEGG" id="xtr:100125017"/>
<dbReference type="AGR" id="Xenbase:XB-GENE-5745545"/>
<dbReference type="CTD" id="148362"/>
<dbReference type="Xenbase" id="XB-GENE-5745545">
    <property type="gene designation" value="brox"/>
</dbReference>
<dbReference type="eggNOG" id="ENOG502QQBR">
    <property type="taxonomic scope" value="Eukaryota"/>
</dbReference>
<dbReference type="HOGENOM" id="CLU_056561_0_0_1"/>
<dbReference type="InParanoid" id="A4IIL4"/>
<dbReference type="OMA" id="YNYCGEN"/>
<dbReference type="OrthoDB" id="10266451at2759"/>
<dbReference type="Proteomes" id="UP000008143">
    <property type="component" value="Chromosome 5"/>
</dbReference>
<dbReference type="Bgee" id="ENSXETG00000015033">
    <property type="expression patterns" value="Expressed in early embryo and 13 other cell types or tissues"/>
</dbReference>
<dbReference type="ExpressionAtlas" id="A4IIL4">
    <property type="expression patterns" value="baseline"/>
</dbReference>
<dbReference type="GO" id="GO:0005635">
    <property type="term" value="C:nuclear envelope"/>
    <property type="evidence" value="ECO:0000250"/>
    <property type="project" value="UniProtKB"/>
</dbReference>
<dbReference type="GO" id="GO:0031965">
    <property type="term" value="C:nuclear membrane"/>
    <property type="evidence" value="ECO:0007669"/>
    <property type="project" value="UniProtKB-SubCell"/>
</dbReference>
<dbReference type="GO" id="GO:0007084">
    <property type="term" value="P:mitotic nuclear membrane reassembly"/>
    <property type="evidence" value="ECO:0000250"/>
    <property type="project" value="UniProtKB"/>
</dbReference>
<dbReference type="CDD" id="cd09243">
    <property type="entry name" value="BRO1_Brox_like"/>
    <property type="match status" value="1"/>
</dbReference>
<dbReference type="Gene3D" id="1.25.40.280">
    <property type="entry name" value="alix/aip1 like domains"/>
    <property type="match status" value="1"/>
</dbReference>
<dbReference type="InterPro" id="IPR004328">
    <property type="entry name" value="BRO1_dom"/>
</dbReference>
<dbReference type="InterPro" id="IPR038499">
    <property type="entry name" value="BRO1_sf"/>
</dbReference>
<dbReference type="InterPro" id="IPR038898">
    <property type="entry name" value="BROX"/>
</dbReference>
<dbReference type="PANTHER" id="PTHR23032">
    <property type="entry name" value="BRO1 DOMAIN-CONTAINING PROTEIN BROX"/>
    <property type="match status" value="1"/>
</dbReference>
<dbReference type="PANTHER" id="PTHR23032:SF13">
    <property type="entry name" value="BRO1 DOMAIN-CONTAINING PROTEIN BROX"/>
    <property type="match status" value="1"/>
</dbReference>
<dbReference type="Pfam" id="PF03097">
    <property type="entry name" value="BRO1"/>
    <property type="match status" value="1"/>
</dbReference>
<dbReference type="SMART" id="SM01041">
    <property type="entry name" value="BRO1"/>
    <property type="match status" value="1"/>
</dbReference>
<dbReference type="PROSITE" id="PS51180">
    <property type="entry name" value="BRO1"/>
    <property type="match status" value="1"/>
</dbReference>
<protein>
    <recommendedName>
        <fullName evidence="2">BRO1 domain-containing protein BROX</fullName>
    </recommendedName>
    <alternativeName>
        <fullName>BRO1 domain- and CAAX motif-containing protein</fullName>
    </alternativeName>
</protein>
<gene>
    <name evidence="2" type="primary">brox</name>
</gene>
<evidence type="ECO:0000250" key="1"/>
<evidence type="ECO:0000250" key="2">
    <source>
        <dbReference type="UniProtKB" id="Q5VW32"/>
    </source>
</evidence>
<evidence type="ECO:0000255" key="3">
    <source>
        <dbReference type="PROSITE-ProRule" id="PRU00526"/>
    </source>
</evidence>
<evidence type="ECO:0000256" key="4">
    <source>
        <dbReference type="SAM" id="MobiDB-lite"/>
    </source>
</evidence>
<evidence type="ECO:0000305" key="5"/>
<sequence>MTHWFHRNPLKATAPVSFNFYGVASTQAASKICSDLRSTRARLLELFSDITCNHEMMKNATDAYFSLLLGFIDSLDGGTQDNKLRYIQNFKWTDTLQGNAPSAQQDAVFELVSMGFNVALWYTKYASRLAGKEDITEEEAKEVHRSLKIAAGVFKHLKENHIPKLITPVEKGRDLETRVIDAYTVQCQAEAQEVTIARAIELKHNPGLIAALAYETANYYQKVDHTLATLDPVYIAKWRSYTQLKMCFYMAYSYCYHGQTLLSADKCGEAIRSLQEAEKFYGKAEALCKEYGETKGPGTTAKPSGHLFFRKMGTLVRNTLEKCQRENGFIYFQKVPPEAPQLELKANYGLVEPVPFEFPAMTSQWSPETHTGFDLTKRPKDDSAKPKKEEEVKPMKEPDIKPQKDSGCQIS</sequence>
<feature type="chain" id="PRO_0000304617" description="BRO1 domain-containing protein BROX">
    <location>
        <begin position="1"/>
        <end position="408"/>
    </location>
</feature>
<feature type="propeptide" id="PRO_0000396741" description="Removed in mature form" evidence="1">
    <location>
        <begin position="409"/>
        <end position="411"/>
    </location>
</feature>
<feature type="domain" description="BRO1" evidence="3">
    <location>
        <begin position="90"/>
        <end position="395"/>
    </location>
</feature>
<feature type="region of interest" description="Disordered" evidence="4">
    <location>
        <begin position="362"/>
        <end position="411"/>
    </location>
</feature>
<feature type="compositionally biased region" description="Basic and acidic residues" evidence="4">
    <location>
        <begin position="375"/>
        <end position="404"/>
    </location>
</feature>
<feature type="modified residue" description="Cysteine methyl ester" evidence="1">
    <location>
        <position position="408"/>
    </location>
</feature>
<feature type="lipid moiety-binding region" description="S-farnesyl cysteine" evidence="1">
    <location>
        <position position="408"/>
    </location>
</feature>
<accession>A4IIL4</accession>